<protein>
    <recommendedName>
        <fullName>Bursicon</fullName>
    </recommendedName>
    <alternativeName>
        <fullName>Bursicon subunit alpha</fullName>
    </alternativeName>
    <alternativeName>
        <fullName>Cuticle-tanning hormone</fullName>
    </alternativeName>
</protein>
<feature type="signal peptide" evidence="4">
    <location>
        <begin position="1"/>
        <end position="26"/>
    </location>
</feature>
<feature type="chain" id="PRO_0000223888" description="Bursicon">
    <location>
        <begin position="27"/>
        <end position="156"/>
    </location>
</feature>
<feature type="domain" description="CTCK" evidence="5">
    <location>
        <begin position="37"/>
        <end position="127"/>
    </location>
</feature>
<feature type="disulfide bond" evidence="2 5">
    <location>
        <begin position="37"/>
        <end position="86"/>
    </location>
</feature>
<feature type="disulfide bond" evidence="2 5">
    <location>
        <begin position="51"/>
        <end position="100"/>
    </location>
</feature>
<feature type="disulfide bond" evidence="2 5">
    <location>
        <begin position="61"/>
        <end position="121"/>
    </location>
</feature>
<feature type="disulfide bond" evidence="2 5">
    <location>
        <begin position="65"/>
        <end position="123"/>
    </location>
</feature>
<feature type="disulfide bond" evidence="2 5">
    <location>
        <begin position="83"/>
        <end position="126"/>
    </location>
</feature>
<feature type="disulfide bond" description="Interchain" evidence="2 5">
    <location>
        <position position="85"/>
    </location>
</feature>
<accession>Q4FCM6</accession>
<name>BURS_MANSE</name>
<proteinExistence type="evidence at transcript level"/>
<reference evidence="6" key="1">
    <citation type="submission" date="2005-06" db="EMBL/GenBank/DDBJ databases">
        <title>Identification of the Manduca sexta burs cDNA using RACE PCR.</title>
        <authorList>
            <person name="Dewey E.M."/>
            <person name="Honegger H.-W."/>
        </authorList>
    </citation>
    <scope>NUCLEOTIDE SEQUENCE [MRNA]</scope>
</reference>
<sequence>MYALDFLFIAFVYFAACHIQEKPVRAQEVQLPPGQECQMTPVIHILKHRGCKPKAIPSFACIGKCTSYVQVSGSKIWQMERTCNCCQEAGEREATVVLYCPDAKNEERRFRKVSTKAPLECMCRPCGSIEESAIIPQEVAGYAEEGPLYNHFRKSF</sequence>
<evidence type="ECO:0000250" key="1"/>
<evidence type="ECO:0000250" key="2">
    <source>
        <dbReference type="UniProtKB" id="P04275"/>
    </source>
</evidence>
<evidence type="ECO:0000250" key="3">
    <source>
        <dbReference type="UniProtKB" id="Q9VD83"/>
    </source>
</evidence>
<evidence type="ECO:0000255" key="4"/>
<evidence type="ECO:0000255" key="5">
    <source>
        <dbReference type="PROSITE-ProRule" id="PRU00039"/>
    </source>
</evidence>
<evidence type="ECO:0000312" key="6">
    <source>
        <dbReference type="EMBL" id="AAZ04374.1"/>
    </source>
</evidence>
<comment type="function">
    <text evidence="3">Final heterodimeric neurohormone released at the end of the molting cycle, involved in the sclerotization (tanning) of the insect cuticle, melanization and wing spreading.</text>
</comment>
<comment type="subunit">
    <text evidence="1">Heterodimer of burs and pburs.</text>
</comment>
<comment type="subcellular location">
    <subcellularLocation>
        <location evidence="1">Secreted</location>
    </subcellularLocation>
</comment>
<organism>
    <name type="scientific">Manduca sexta</name>
    <name type="common">Tobacco hawkmoth</name>
    <name type="synonym">Tobacco hornworm</name>
    <dbReference type="NCBI Taxonomy" id="7130"/>
    <lineage>
        <taxon>Eukaryota</taxon>
        <taxon>Metazoa</taxon>
        <taxon>Ecdysozoa</taxon>
        <taxon>Arthropoda</taxon>
        <taxon>Hexapoda</taxon>
        <taxon>Insecta</taxon>
        <taxon>Pterygota</taxon>
        <taxon>Neoptera</taxon>
        <taxon>Endopterygota</taxon>
        <taxon>Lepidoptera</taxon>
        <taxon>Glossata</taxon>
        <taxon>Ditrysia</taxon>
        <taxon>Bombycoidea</taxon>
        <taxon>Sphingidae</taxon>
        <taxon>Sphinginae</taxon>
        <taxon>Sphingini</taxon>
        <taxon>Manduca</taxon>
    </lineage>
</organism>
<keyword id="KW-1015">Disulfide bond</keyword>
<keyword id="KW-0372">Hormone</keyword>
<keyword id="KW-0964">Secreted</keyword>
<keyword id="KW-0732">Signal</keyword>
<dbReference type="EMBL" id="DQ094149">
    <property type="protein sequence ID" value="AAZ04374.1"/>
    <property type="molecule type" value="mRNA"/>
</dbReference>
<dbReference type="EnsemblMetazoa" id="XM_030171994.2">
    <property type="protein sequence ID" value="XP_030027854.2"/>
    <property type="gene ID" value="LOC115445641"/>
</dbReference>
<dbReference type="OrthoDB" id="6493004at2759"/>
<dbReference type="GO" id="GO:0005615">
    <property type="term" value="C:extracellular space"/>
    <property type="evidence" value="ECO:0007669"/>
    <property type="project" value="TreeGrafter"/>
</dbReference>
<dbReference type="GO" id="GO:0036122">
    <property type="term" value="F:BMP binding"/>
    <property type="evidence" value="ECO:0007669"/>
    <property type="project" value="TreeGrafter"/>
</dbReference>
<dbReference type="GO" id="GO:0005179">
    <property type="term" value="F:hormone activity"/>
    <property type="evidence" value="ECO:0007669"/>
    <property type="project" value="UniProtKB-KW"/>
</dbReference>
<dbReference type="GO" id="GO:0009887">
    <property type="term" value="P:animal organ morphogenesis"/>
    <property type="evidence" value="ECO:0007669"/>
    <property type="project" value="TreeGrafter"/>
</dbReference>
<dbReference type="GO" id="GO:0038098">
    <property type="term" value="P:sequestering of BMP from receptor via BMP binding"/>
    <property type="evidence" value="ECO:0007669"/>
    <property type="project" value="TreeGrafter"/>
</dbReference>
<dbReference type="Gene3D" id="2.10.90.10">
    <property type="entry name" value="Cystine-knot cytokines"/>
    <property type="match status" value="1"/>
</dbReference>
<dbReference type="InterPro" id="IPR006207">
    <property type="entry name" value="Cys_knot_C"/>
</dbReference>
<dbReference type="InterPro" id="IPR029034">
    <property type="entry name" value="Cystine-knot_cytokine"/>
</dbReference>
<dbReference type="InterPro" id="IPR004133">
    <property type="entry name" value="DAN"/>
</dbReference>
<dbReference type="PANTHER" id="PTHR15283:SF7">
    <property type="entry name" value="BURSICON"/>
    <property type="match status" value="1"/>
</dbReference>
<dbReference type="PANTHER" id="PTHR15283">
    <property type="entry name" value="GREMLIN 1"/>
    <property type="match status" value="1"/>
</dbReference>
<dbReference type="Pfam" id="PF03045">
    <property type="entry name" value="DAN"/>
    <property type="match status" value="1"/>
</dbReference>
<dbReference type="PROSITE" id="PS01225">
    <property type="entry name" value="CTCK_2"/>
    <property type="match status" value="1"/>
</dbReference>
<gene>
    <name evidence="6" type="primary">burs</name>
</gene>